<evidence type="ECO:0000255" key="1">
    <source>
        <dbReference type="HAMAP-Rule" id="MF_01631"/>
    </source>
</evidence>
<gene>
    <name evidence="1" type="primary">glmU</name>
    <name type="ordered locus">LMOf2365_0209</name>
</gene>
<feature type="chain" id="PRO_0000233796" description="Bifunctional protein GlmU">
    <location>
        <begin position="1"/>
        <end position="457"/>
    </location>
</feature>
<feature type="region of interest" description="Pyrophosphorylase" evidence="1">
    <location>
        <begin position="1"/>
        <end position="230"/>
    </location>
</feature>
<feature type="region of interest" description="Linker" evidence="1">
    <location>
        <begin position="231"/>
        <end position="251"/>
    </location>
</feature>
<feature type="region of interest" description="N-acetyltransferase" evidence="1">
    <location>
        <begin position="252"/>
        <end position="457"/>
    </location>
</feature>
<feature type="active site" description="Proton acceptor" evidence="1">
    <location>
        <position position="363"/>
    </location>
</feature>
<feature type="binding site" evidence="1">
    <location>
        <begin position="9"/>
        <end position="12"/>
    </location>
    <ligand>
        <name>UDP-N-acetyl-alpha-D-glucosamine</name>
        <dbReference type="ChEBI" id="CHEBI:57705"/>
    </ligand>
</feature>
<feature type="binding site" evidence="1">
    <location>
        <position position="23"/>
    </location>
    <ligand>
        <name>UDP-N-acetyl-alpha-D-glucosamine</name>
        <dbReference type="ChEBI" id="CHEBI:57705"/>
    </ligand>
</feature>
<feature type="binding site" evidence="1">
    <location>
        <position position="73"/>
    </location>
    <ligand>
        <name>UDP-N-acetyl-alpha-D-glucosamine</name>
        <dbReference type="ChEBI" id="CHEBI:57705"/>
    </ligand>
</feature>
<feature type="binding site" evidence="1">
    <location>
        <begin position="78"/>
        <end position="79"/>
    </location>
    <ligand>
        <name>UDP-N-acetyl-alpha-D-glucosamine</name>
        <dbReference type="ChEBI" id="CHEBI:57705"/>
    </ligand>
</feature>
<feature type="binding site" evidence="1">
    <location>
        <position position="103"/>
    </location>
    <ligand>
        <name>Mg(2+)</name>
        <dbReference type="ChEBI" id="CHEBI:18420"/>
    </ligand>
</feature>
<feature type="binding site" evidence="1">
    <location>
        <position position="140"/>
    </location>
    <ligand>
        <name>UDP-N-acetyl-alpha-D-glucosamine</name>
        <dbReference type="ChEBI" id="CHEBI:57705"/>
    </ligand>
</feature>
<feature type="binding site" evidence="1">
    <location>
        <position position="155"/>
    </location>
    <ligand>
        <name>UDP-N-acetyl-alpha-D-glucosamine</name>
        <dbReference type="ChEBI" id="CHEBI:57705"/>
    </ligand>
</feature>
<feature type="binding site" evidence="1">
    <location>
        <position position="170"/>
    </location>
    <ligand>
        <name>UDP-N-acetyl-alpha-D-glucosamine</name>
        <dbReference type="ChEBI" id="CHEBI:57705"/>
    </ligand>
</feature>
<feature type="binding site" evidence="1">
    <location>
        <position position="228"/>
    </location>
    <ligand>
        <name>Mg(2+)</name>
        <dbReference type="ChEBI" id="CHEBI:18420"/>
    </ligand>
</feature>
<feature type="binding site" evidence="1">
    <location>
        <position position="228"/>
    </location>
    <ligand>
        <name>UDP-N-acetyl-alpha-D-glucosamine</name>
        <dbReference type="ChEBI" id="CHEBI:57705"/>
    </ligand>
</feature>
<feature type="binding site" evidence="1">
    <location>
        <position position="333"/>
    </location>
    <ligand>
        <name>UDP-N-acetyl-alpha-D-glucosamine</name>
        <dbReference type="ChEBI" id="CHEBI:57705"/>
    </ligand>
</feature>
<feature type="binding site" evidence="1">
    <location>
        <position position="351"/>
    </location>
    <ligand>
        <name>UDP-N-acetyl-alpha-D-glucosamine</name>
        <dbReference type="ChEBI" id="CHEBI:57705"/>
    </ligand>
</feature>
<feature type="binding site" evidence="1">
    <location>
        <position position="366"/>
    </location>
    <ligand>
        <name>UDP-N-acetyl-alpha-D-glucosamine</name>
        <dbReference type="ChEBI" id="CHEBI:57705"/>
    </ligand>
</feature>
<feature type="binding site" evidence="1">
    <location>
        <position position="377"/>
    </location>
    <ligand>
        <name>UDP-N-acetyl-alpha-D-glucosamine</name>
        <dbReference type="ChEBI" id="CHEBI:57705"/>
    </ligand>
</feature>
<feature type="binding site" evidence="1">
    <location>
        <begin position="386"/>
        <end position="387"/>
    </location>
    <ligand>
        <name>acetyl-CoA</name>
        <dbReference type="ChEBI" id="CHEBI:57288"/>
    </ligand>
</feature>
<feature type="binding site" evidence="1">
    <location>
        <position position="423"/>
    </location>
    <ligand>
        <name>acetyl-CoA</name>
        <dbReference type="ChEBI" id="CHEBI:57288"/>
    </ligand>
</feature>
<feature type="binding site" evidence="1">
    <location>
        <position position="440"/>
    </location>
    <ligand>
        <name>acetyl-CoA</name>
        <dbReference type="ChEBI" id="CHEBI:57288"/>
    </ligand>
</feature>
<organism>
    <name type="scientific">Listeria monocytogenes serotype 4b (strain F2365)</name>
    <dbReference type="NCBI Taxonomy" id="265669"/>
    <lineage>
        <taxon>Bacteria</taxon>
        <taxon>Bacillati</taxon>
        <taxon>Bacillota</taxon>
        <taxon>Bacilli</taxon>
        <taxon>Bacillales</taxon>
        <taxon>Listeriaceae</taxon>
        <taxon>Listeria</taxon>
    </lineage>
</organism>
<keyword id="KW-0012">Acyltransferase</keyword>
<keyword id="KW-0133">Cell shape</keyword>
<keyword id="KW-0961">Cell wall biogenesis/degradation</keyword>
<keyword id="KW-0963">Cytoplasm</keyword>
<keyword id="KW-0460">Magnesium</keyword>
<keyword id="KW-0479">Metal-binding</keyword>
<keyword id="KW-0511">Multifunctional enzyme</keyword>
<keyword id="KW-0548">Nucleotidyltransferase</keyword>
<keyword id="KW-0573">Peptidoglycan synthesis</keyword>
<keyword id="KW-0677">Repeat</keyword>
<keyword id="KW-0808">Transferase</keyword>
<name>GLMU_LISMF</name>
<reference key="1">
    <citation type="journal article" date="2004" name="Nucleic Acids Res.">
        <title>Whole genome comparisons of serotype 4b and 1/2a strains of the food-borne pathogen Listeria monocytogenes reveal new insights into the core genome components of this species.</title>
        <authorList>
            <person name="Nelson K.E."/>
            <person name="Fouts D.E."/>
            <person name="Mongodin E.F."/>
            <person name="Ravel J."/>
            <person name="DeBoy R.T."/>
            <person name="Kolonay J.F."/>
            <person name="Rasko D.A."/>
            <person name="Angiuoli S.V."/>
            <person name="Gill S.R."/>
            <person name="Paulsen I.T."/>
            <person name="Peterson J.D."/>
            <person name="White O."/>
            <person name="Nelson W.C."/>
            <person name="Nierman W.C."/>
            <person name="Beanan M.J."/>
            <person name="Brinkac L.M."/>
            <person name="Daugherty S.C."/>
            <person name="Dodson R.J."/>
            <person name="Durkin A.S."/>
            <person name="Madupu R."/>
            <person name="Haft D.H."/>
            <person name="Selengut J."/>
            <person name="Van Aken S.E."/>
            <person name="Khouri H.M."/>
            <person name="Fedorova N."/>
            <person name="Forberger H.A."/>
            <person name="Tran B."/>
            <person name="Kathariou S."/>
            <person name="Wonderling L.D."/>
            <person name="Uhlich G.A."/>
            <person name="Bayles D.O."/>
            <person name="Luchansky J.B."/>
            <person name="Fraser C.M."/>
        </authorList>
    </citation>
    <scope>NUCLEOTIDE SEQUENCE [LARGE SCALE GENOMIC DNA]</scope>
    <source>
        <strain>F2365</strain>
    </source>
</reference>
<protein>
    <recommendedName>
        <fullName evidence="1">Bifunctional protein GlmU</fullName>
    </recommendedName>
    <domain>
        <recommendedName>
            <fullName evidence="1">UDP-N-acetylglucosamine pyrophosphorylase</fullName>
            <ecNumber evidence="1">2.7.7.23</ecNumber>
        </recommendedName>
        <alternativeName>
            <fullName evidence="1">N-acetylglucosamine-1-phosphate uridyltransferase</fullName>
        </alternativeName>
    </domain>
    <domain>
        <recommendedName>
            <fullName evidence="1">Glucosamine-1-phosphate N-acetyltransferase</fullName>
            <ecNumber evidence="1">2.3.1.157</ecNumber>
        </recommendedName>
    </domain>
</protein>
<comment type="function">
    <text evidence="1">Catalyzes the last two sequential reactions in the de novo biosynthetic pathway for UDP-N-acetylglucosamine (UDP-GlcNAc). The C-terminal domain catalyzes the transfer of acetyl group from acetyl coenzyme A to glucosamine-1-phosphate (GlcN-1-P) to produce N-acetylglucosamine-1-phosphate (GlcNAc-1-P), which is converted into UDP-GlcNAc by the transfer of uridine 5-monophosphate (from uridine 5-triphosphate), a reaction catalyzed by the N-terminal domain.</text>
</comment>
<comment type="catalytic activity">
    <reaction evidence="1">
        <text>alpha-D-glucosamine 1-phosphate + acetyl-CoA = N-acetyl-alpha-D-glucosamine 1-phosphate + CoA + H(+)</text>
        <dbReference type="Rhea" id="RHEA:13725"/>
        <dbReference type="ChEBI" id="CHEBI:15378"/>
        <dbReference type="ChEBI" id="CHEBI:57287"/>
        <dbReference type="ChEBI" id="CHEBI:57288"/>
        <dbReference type="ChEBI" id="CHEBI:57776"/>
        <dbReference type="ChEBI" id="CHEBI:58516"/>
        <dbReference type="EC" id="2.3.1.157"/>
    </reaction>
</comment>
<comment type="catalytic activity">
    <reaction evidence="1">
        <text>N-acetyl-alpha-D-glucosamine 1-phosphate + UTP + H(+) = UDP-N-acetyl-alpha-D-glucosamine + diphosphate</text>
        <dbReference type="Rhea" id="RHEA:13509"/>
        <dbReference type="ChEBI" id="CHEBI:15378"/>
        <dbReference type="ChEBI" id="CHEBI:33019"/>
        <dbReference type="ChEBI" id="CHEBI:46398"/>
        <dbReference type="ChEBI" id="CHEBI:57705"/>
        <dbReference type="ChEBI" id="CHEBI:57776"/>
        <dbReference type="EC" id="2.7.7.23"/>
    </reaction>
</comment>
<comment type="cofactor">
    <cofactor evidence="1">
        <name>Mg(2+)</name>
        <dbReference type="ChEBI" id="CHEBI:18420"/>
    </cofactor>
    <text evidence="1">Binds 1 Mg(2+) ion per subunit.</text>
</comment>
<comment type="pathway">
    <text evidence="1">Nucleotide-sugar biosynthesis; UDP-N-acetyl-alpha-D-glucosamine biosynthesis; N-acetyl-alpha-D-glucosamine 1-phosphate from alpha-D-glucosamine 6-phosphate (route II): step 2/2.</text>
</comment>
<comment type="pathway">
    <text evidence="1">Nucleotide-sugar biosynthesis; UDP-N-acetyl-alpha-D-glucosamine biosynthesis; UDP-N-acetyl-alpha-D-glucosamine from N-acetyl-alpha-D-glucosamine 1-phosphate: step 1/1.</text>
</comment>
<comment type="pathway">
    <text evidence="1">Bacterial outer membrane biogenesis; LPS lipid A biosynthesis.</text>
</comment>
<comment type="subunit">
    <text evidence="1">Homotrimer.</text>
</comment>
<comment type="subcellular location">
    <subcellularLocation>
        <location evidence="1">Cytoplasm</location>
    </subcellularLocation>
</comment>
<comment type="similarity">
    <text evidence="1">In the N-terminal section; belongs to the N-acetylglucosamine-1-phosphate uridyltransferase family.</text>
</comment>
<comment type="similarity">
    <text evidence="1">In the C-terminal section; belongs to the transferase hexapeptide repeat family.</text>
</comment>
<dbReference type="EC" id="2.7.7.23" evidence="1"/>
<dbReference type="EC" id="2.3.1.157" evidence="1"/>
<dbReference type="EMBL" id="AE017262">
    <property type="protein sequence ID" value="AAT02996.1"/>
    <property type="molecule type" value="Genomic_DNA"/>
</dbReference>
<dbReference type="RefSeq" id="WP_003728175.1">
    <property type="nucleotide sequence ID" value="NC_002973.6"/>
</dbReference>
<dbReference type="SMR" id="Q724L5"/>
<dbReference type="KEGG" id="lmf:LMOf2365_0209"/>
<dbReference type="HOGENOM" id="CLU_029499_15_2_9"/>
<dbReference type="UniPathway" id="UPA00113">
    <property type="reaction ID" value="UER00532"/>
</dbReference>
<dbReference type="UniPathway" id="UPA00113">
    <property type="reaction ID" value="UER00533"/>
</dbReference>
<dbReference type="UniPathway" id="UPA00973"/>
<dbReference type="GO" id="GO:0005737">
    <property type="term" value="C:cytoplasm"/>
    <property type="evidence" value="ECO:0007669"/>
    <property type="project" value="UniProtKB-SubCell"/>
</dbReference>
<dbReference type="GO" id="GO:0016020">
    <property type="term" value="C:membrane"/>
    <property type="evidence" value="ECO:0007669"/>
    <property type="project" value="GOC"/>
</dbReference>
<dbReference type="GO" id="GO:0019134">
    <property type="term" value="F:glucosamine-1-phosphate N-acetyltransferase activity"/>
    <property type="evidence" value="ECO:0007669"/>
    <property type="project" value="UniProtKB-UniRule"/>
</dbReference>
<dbReference type="GO" id="GO:0000287">
    <property type="term" value="F:magnesium ion binding"/>
    <property type="evidence" value="ECO:0007669"/>
    <property type="project" value="UniProtKB-UniRule"/>
</dbReference>
<dbReference type="GO" id="GO:0003977">
    <property type="term" value="F:UDP-N-acetylglucosamine diphosphorylase activity"/>
    <property type="evidence" value="ECO:0007669"/>
    <property type="project" value="UniProtKB-UniRule"/>
</dbReference>
<dbReference type="GO" id="GO:0000902">
    <property type="term" value="P:cell morphogenesis"/>
    <property type="evidence" value="ECO:0007669"/>
    <property type="project" value="UniProtKB-UniRule"/>
</dbReference>
<dbReference type="GO" id="GO:0071555">
    <property type="term" value="P:cell wall organization"/>
    <property type="evidence" value="ECO:0007669"/>
    <property type="project" value="UniProtKB-KW"/>
</dbReference>
<dbReference type="GO" id="GO:0009245">
    <property type="term" value="P:lipid A biosynthetic process"/>
    <property type="evidence" value="ECO:0007669"/>
    <property type="project" value="UniProtKB-UniRule"/>
</dbReference>
<dbReference type="GO" id="GO:0009252">
    <property type="term" value="P:peptidoglycan biosynthetic process"/>
    <property type="evidence" value="ECO:0007669"/>
    <property type="project" value="UniProtKB-UniRule"/>
</dbReference>
<dbReference type="GO" id="GO:0008360">
    <property type="term" value="P:regulation of cell shape"/>
    <property type="evidence" value="ECO:0007669"/>
    <property type="project" value="UniProtKB-KW"/>
</dbReference>
<dbReference type="GO" id="GO:0006048">
    <property type="term" value="P:UDP-N-acetylglucosamine biosynthetic process"/>
    <property type="evidence" value="ECO:0007669"/>
    <property type="project" value="UniProtKB-UniPathway"/>
</dbReference>
<dbReference type="CDD" id="cd02540">
    <property type="entry name" value="GT2_GlmU_N_bac"/>
    <property type="match status" value="1"/>
</dbReference>
<dbReference type="CDD" id="cd03353">
    <property type="entry name" value="LbH_GlmU_C"/>
    <property type="match status" value="1"/>
</dbReference>
<dbReference type="Gene3D" id="2.160.10.10">
    <property type="entry name" value="Hexapeptide repeat proteins"/>
    <property type="match status" value="1"/>
</dbReference>
<dbReference type="Gene3D" id="3.90.550.10">
    <property type="entry name" value="Spore Coat Polysaccharide Biosynthesis Protein SpsA, Chain A"/>
    <property type="match status" value="1"/>
</dbReference>
<dbReference type="HAMAP" id="MF_01631">
    <property type="entry name" value="GlmU"/>
    <property type="match status" value="1"/>
</dbReference>
<dbReference type="InterPro" id="IPR005882">
    <property type="entry name" value="Bifunctional_GlmU"/>
</dbReference>
<dbReference type="InterPro" id="IPR050065">
    <property type="entry name" value="GlmU-like"/>
</dbReference>
<dbReference type="InterPro" id="IPR038009">
    <property type="entry name" value="GlmU_C_LbH"/>
</dbReference>
<dbReference type="InterPro" id="IPR001451">
    <property type="entry name" value="Hexapep"/>
</dbReference>
<dbReference type="InterPro" id="IPR018357">
    <property type="entry name" value="Hexapep_transf_CS"/>
</dbReference>
<dbReference type="InterPro" id="IPR005835">
    <property type="entry name" value="NTP_transferase_dom"/>
</dbReference>
<dbReference type="InterPro" id="IPR029044">
    <property type="entry name" value="Nucleotide-diphossugar_trans"/>
</dbReference>
<dbReference type="InterPro" id="IPR011004">
    <property type="entry name" value="Trimer_LpxA-like_sf"/>
</dbReference>
<dbReference type="NCBIfam" id="TIGR01173">
    <property type="entry name" value="glmU"/>
    <property type="match status" value="1"/>
</dbReference>
<dbReference type="NCBIfam" id="NF010934">
    <property type="entry name" value="PRK14354.1"/>
    <property type="match status" value="1"/>
</dbReference>
<dbReference type="PANTHER" id="PTHR43584:SF3">
    <property type="entry name" value="BIFUNCTIONAL PROTEIN GLMU"/>
    <property type="match status" value="1"/>
</dbReference>
<dbReference type="PANTHER" id="PTHR43584">
    <property type="entry name" value="NUCLEOTIDYL TRANSFERASE"/>
    <property type="match status" value="1"/>
</dbReference>
<dbReference type="Pfam" id="PF00132">
    <property type="entry name" value="Hexapep"/>
    <property type="match status" value="3"/>
</dbReference>
<dbReference type="Pfam" id="PF00483">
    <property type="entry name" value="NTP_transferase"/>
    <property type="match status" value="1"/>
</dbReference>
<dbReference type="SUPFAM" id="SSF53448">
    <property type="entry name" value="Nucleotide-diphospho-sugar transferases"/>
    <property type="match status" value="1"/>
</dbReference>
<dbReference type="SUPFAM" id="SSF51161">
    <property type="entry name" value="Trimeric LpxA-like enzymes"/>
    <property type="match status" value="1"/>
</dbReference>
<dbReference type="PROSITE" id="PS00101">
    <property type="entry name" value="HEXAPEP_TRANSFERASES"/>
    <property type="match status" value="1"/>
</dbReference>
<accession>Q724L5</accession>
<sequence>MSKRYAVVLAAGQGTRMKSKLYKVLHPVCGKPMVEHVVDQISTLNVDKVVTIVGHGAEKVQEHLAGKSEFVKQEEQLGTAHAVLQAKAELAGKDGVTLVVCGDTPLIEASTMEALLKYHHEKRAKATILTTVIEDPTGYGRIIRDDLGIVEKIVEHKDATEKEQRISEINTGTYCFDNKALFEALENVSNDNVQGEYYLPDVIKILKDSDEVVAAYRMESFEESLGVNDRIALAEASRLMQRRINENHMRNGVTLVNPENTYIDIDVKIGQDTVIEPGVMLRGETVIGDDCVVTSGSEIVNSVIGERVHVRTSSIFESKVGDDVQIGPYAHLRPESDIHDHVKIGNYVETKKAVVGEGTKLPHFIYMGDAEIGKNVNVGCGSIAVNYDGKNKAKTIIGDNVFVGCNSNLIAPVKVGDRAFIAAGSTITKDVPDDALGIARAKQDNKLGYAKHLNHGK</sequence>
<proteinExistence type="inferred from homology"/>